<organism>
    <name type="scientific">Pseudomonas syringae pv. tomato (strain ATCC BAA-871 / DC3000)</name>
    <dbReference type="NCBI Taxonomy" id="223283"/>
    <lineage>
        <taxon>Bacteria</taxon>
        <taxon>Pseudomonadati</taxon>
        <taxon>Pseudomonadota</taxon>
        <taxon>Gammaproteobacteria</taxon>
        <taxon>Pseudomonadales</taxon>
        <taxon>Pseudomonadaceae</taxon>
        <taxon>Pseudomonas</taxon>
    </lineage>
</organism>
<reference key="1">
    <citation type="journal article" date="2003" name="Proc. Natl. Acad. Sci. U.S.A.">
        <title>The complete genome sequence of the Arabidopsis and tomato pathogen Pseudomonas syringae pv. tomato DC3000.</title>
        <authorList>
            <person name="Buell C.R."/>
            <person name="Joardar V."/>
            <person name="Lindeberg M."/>
            <person name="Selengut J."/>
            <person name="Paulsen I.T."/>
            <person name="Gwinn M.L."/>
            <person name="Dodson R.J."/>
            <person name="DeBoy R.T."/>
            <person name="Durkin A.S."/>
            <person name="Kolonay J.F."/>
            <person name="Madupu R."/>
            <person name="Daugherty S.C."/>
            <person name="Brinkac L.M."/>
            <person name="Beanan M.J."/>
            <person name="Haft D.H."/>
            <person name="Nelson W.C."/>
            <person name="Davidsen T.M."/>
            <person name="Zafar N."/>
            <person name="Zhou L."/>
            <person name="Liu J."/>
            <person name="Yuan Q."/>
            <person name="Khouri H.M."/>
            <person name="Fedorova N.B."/>
            <person name="Tran B."/>
            <person name="Russell D."/>
            <person name="Berry K.J."/>
            <person name="Utterback T.R."/>
            <person name="Van Aken S.E."/>
            <person name="Feldblyum T.V."/>
            <person name="D'Ascenzo M."/>
            <person name="Deng W.-L."/>
            <person name="Ramos A.R."/>
            <person name="Alfano J.R."/>
            <person name="Cartinhour S."/>
            <person name="Chatterjee A.K."/>
            <person name="Delaney T.P."/>
            <person name="Lazarowitz S.G."/>
            <person name="Martin G.B."/>
            <person name="Schneider D.J."/>
            <person name="Tang X."/>
            <person name="Bender C.L."/>
            <person name="White O."/>
            <person name="Fraser C.M."/>
            <person name="Collmer A."/>
        </authorList>
    </citation>
    <scope>NUCLEOTIDE SEQUENCE [LARGE SCALE GENOMIC DNA]</scope>
    <source>
        <strain>ATCC BAA-871 / DC3000</strain>
    </source>
</reference>
<keyword id="KW-0131">Cell cycle</keyword>
<keyword id="KW-0132">Cell division</keyword>
<keyword id="KW-0997">Cell inner membrane</keyword>
<keyword id="KW-1003">Cell membrane</keyword>
<keyword id="KW-0133">Cell shape</keyword>
<keyword id="KW-0961">Cell wall biogenesis/degradation</keyword>
<keyword id="KW-0328">Glycosyltransferase</keyword>
<keyword id="KW-0472">Membrane</keyword>
<keyword id="KW-0573">Peptidoglycan synthesis</keyword>
<keyword id="KW-1185">Reference proteome</keyword>
<keyword id="KW-0808">Transferase</keyword>
<dbReference type="EC" id="2.4.1.227" evidence="1"/>
<dbReference type="EMBL" id="AE016853">
    <property type="protein sequence ID" value="AAO57857.1"/>
    <property type="molecule type" value="Genomic_DNA"/>
</dbReference>
<dbReference type="RefSeq" id="NP_794162.1">
    <property type="nucleotide sequence ID" value="NC_004578.1"/>
</dbReference>
<dbReference type="RefSeq" id="WP_005766568.1">
    <property type="nucleotide sequence ID" value="NC_004578.1"/>
</dbReference>
<dbReference type="SMR" id="Q87WY5"/>
<dbReference type="STRING" id="223283.PSPTO_4408"/>
<dbReference type="CAZy" id="GT28">
    <property type="family name" value="Glycosyltransferase Family 28"/>
</dbReference>
<dbReference type="GeneID" id="1186089"/>
<dbReference type="KEGG" id="pst:PSPTO_4408"/>
<dbReference type="PATRIC" id="fig|223283.9.peg.4523"/>
<dbReference type="eggNOG" id="COG0707">
    <property type="taxonomic scope" value="Bacteria"/>
</dbReference>
<dbReference type="HOGENOM" id="CLU_037404_2_0_6"/>
<dbReference type="OrthoDB" id="9808936at2"/>
<dbReference type="PhylomeDB" id="Q87WY5"/>
<dbReference type="UniPathway" id="UPA00219"/>
<dbReference type="Proteomes" id="UP000002515">
    <property type="component" value="Chromosome"/>
</dbReference>
<dbReference type="GO" id="GO:0005886">
    <property type="term" value="C:plasma membrane"/>
    <property type="evidence" value="ECO:0007669"/>
    <property type="project" value="UniProtKB-SubCell"/>
</dbReference>
<dbReference type="GO" id="GO:0051991">
    <property type="term" value="F:UDP-N-acetyl-D-glucosamine:N-acetylmuramoyl-L-alanyl-D-glutamyl-meso-2,6-diaminopimelyl-D-alanyl-D-alanine-diphosphoundecaprenol 4-beta-N-acetylglucosaminlytransferase activity"/>
    <property type="evidence" value="ECO:0007669"/>
    <property type="project" value="RHEA"/>
</dbReference>
<dbReference type="GO" id="GO:0050511">
    <property type="term" value="F:undecaprenyldiphospho-muramoylpentapeptide beta-N-acetylglucosaminyltransferase activity"/>
    <property type="evidence" value="ECO:0007669"/>
    <property type="project" value="UniProtKB-UniRule"/>
</dbReference>
<dbReference type="GO" id="GO:0005975">
    <property type="term" value="P:carbohydrate metabolic process"/>
    <property type="evidence" value="ECO:0007669"/>
    <property type="project" value="InterPro"/>
</dbReference>
<dbReference type="GO" id="GO:0051301">
    <property type="term" value="P:cell division"/>
    <property type="evidence" value="ECO:0007669"/>
    <property type="project" value="UniProtKB-KW"/>
</dbReference>
<dbReference type="GO" id="GO:0071555">
    <property type="term" value="P:cell wall organization"/>
    <property type="evidence" value="ECO:0007669"/>
    <property type="project" value="UniProtKB-KW"/>
</dbReference>
<dbReference type="GO" id="GO:0030259">
    <property type="term" value="P:lipid glycosylation"/>
    <property type="evidence" value="ECO:0007669"/>
    <property type="project" value="UniProtKB-UniRule"/>
</dbReference>
<dbReference type="GO" id="GO:0009252">
    <property type="term" value="P:peptidoglycan biosynthetic process"/>
    <property type="evidence" value="ECO:0007669"/>
    <property type="project" value="UniProtKB-UniRule"/>
</dbReference>
<dbReference type="GO" id="GO:0008360">
    <property type="term" value="P:regulation of cell shape"/>
    <property type="evidence" value="ECO:0007669"/>
    <property type="project" value="UniProtKB-KW"/>
</dbReference>
<dbReference type="CDD" id="cd03785">
    <property type="entry name" value="GT28_MurG"/>
    <property type="match status" value="1"/>
</dbReference>
<dbReference type="Gene3D" id="3.40.50.2000">
    <property type="entry name" value="Glycogen Phosphorylase B"/>
    <property type="match status" value="2"/>
</dbReference>
<dbReference type="HAMAP" id="MF_00033">
    <property type="entry name" value="MurG"/>
    <property type="match status" value="1"/>
</dbReference>
<dbReference type="InterPro" id="IPR006009">
    <property type="entry name" value="GlcNAc_MurG"/>
</dbReference>
<dbReference type="InterPro" id="IPR007235">
    <property type="entry name" value="Glyco_trans_28_C"/>
</dbReference>
<dbReference type="InterPro" id="IPR004276">
    <property type="entry name" value="GlycoTrans_28_N"/>
</dbReference>
<dbReference type="NCBIfam" id="TIGR01133">
    <property type="entry name" value="murG"/>
    <property type="match status" value="1"/>
</dbReference>
<dbReference type="PANTHER" id="PTHR21015:SF22">
    <property type="entry name" value="GLYCOSYLTRANSFERASE"/>
    <property type="match status" value="1"/>
</dbReference>
<dbReference type="PANTHER" id="PTHR21015">
    <property type="entry name" value="UDP-N-ACETYLGLUCOSAMINE--N-ACETYLMURAMYL-(PENTAPEPTIDE) PYROPHOSPHORYL-UNDECAPRENOL N-ACETYLGLUCOSAMINE TRANSFERASE 1"/>
    <property type="match status" value="1"/>
</dbReference>
<dbReference type="Pfam" id="PF04101">
    <property type="entry name" value="Glyco_tran_28_C"/>
    <property type="match status" value="1"/>
</dbReference>
<dbReference type="Pfam" id="PF03033">
    <property type="entry name" value="Glyco_transf_28"/>
    <property type="match status" value="1"/>
</dbReference>
<dbReference type="SUPFAM" id="SSF53756">
    <property type="entry name" value="UDP-Glycosyltransferase/glycogen phosphorylase"/>
    <property type="match status" value="1"/>
</dbReference>
<evidence type="ECO:0000255" key="1">
    <source>
        <dbReference type="HAMAP-Rule" id="MF_00033"/>
    </source>
</evidence>
<sequence length="356" mass="37798">MDANVLIMAGGTGGHVFPALACAREFQARGYKVHWLGTPRGIENELIPQAGLPLHLINVTGLRGKGRLSLLKAPFMLLKALMQARKVVRQVKPVCVVGFGGYVTGPGGLAARLAGVPLIIHEQNAVAGTANRSLASFASRVCEAFPNTFAASAKRRTTGNPVRVELFLETPRQALAGRKARLLVLGGSLGAEPLNKLLPDALAQLPQDIQPEVFHQSGKNHDAVTAERYRNVGVEAQVAPFIQNMAQAYSWADLVVCRAGALTISELAAAGLPSLLIPLPHAIDDHQSRNADYLAREGAAFVMPQATTGAAEMAARLKEVLMQPEQLNSMARTARSLAKPDATNTVVNVCVEVAHG</sequence>
<feature type="chain" id="PRO_0000109199" description="UDP-N-acetylglucosamine--N-acetylmuramyl-(pentapeptide) pyrophosphoryl-undecaprenol N-acetylglucosamine transferase">
    <location>
        <begin position="1"/>
        <end position="356"/>
    </location>
</feature>
<feature type="binding site" evidence="1">
    <location>
        <begin position="12"/>
        <end position="14"/>
    </location>
    <ligand>
        <name>UDP-N-acetyl-alpha-D-glucosamine</name>
        <dbReference type="ChEBI" id="CHEBI:57705"/>
    </ligand>
</feature>
<feature type="binding site" evidence="1">
    <location>
        <position position="124"/>
    </location>
    <ligand>
        <name>UDP-N-acetyl-alpha-D-glucosamine</name>
        <dbReference type="ChEBI" id="CHEBI:57705"/>
    </ligand>
</feature>
<feature type="binding site" evidence="1">
    <location>
        <position position="163"/>
    </location>
    <ligand>
        <name>UDP-N-acetyl-alpha-D-glucosamine</name>
        <dbReference type="ChEBI" id="CHEBI:57705"/>
    </ligand>
</feature>
<feature type="binding site" evidence="1">
    <location>
        <position position="188"/>
    </location>
    <ligand>
        <name>UDP-N-acetyl-alpha-D-glucosamine</name>
        <dbReference type="ChEBI" id="CHEBI:57705"/>
    </ligand>
</feature>
<feature type="binding site" evidence="1">
    <location>
        <position position="242"/>
    </location>
    <ligand>
        <name>UDP-N-acetyl-alpha-D-glucosamine</name>
        <dbReference type="ChEBI" id="CHEBI:57705"/>
    </ligand>
</feature>
<feature type="binding site" evidence="1">
    <location>
        <position position="287"/>
    </location>
    <ligand>
        <name>UDP-N-acetyl-alpha-D-glucosamine</name>
        <dbReference type="ChEBI" id="CHEBI:57705"/>
    </ligand>
</feature>
<protein>
    <recommendedName>
        <fullName evidence="1">UDP-N-acetylglucosamine--N-acetylmuramyl-(pentapeptide) pyrophosphoryl-undecaprenol N-acetylglucosamine transferase</fullName>
        <ecNumber evidence="1">2.4.1.227</ecNumber>
    </recommendedName>
    <alternativeName>
        <fullName evidence="1">Undecaprenyl-PP-MurNAc-pentapeptide-UDPGlcNAc GlcNAc transferase</fullName>
    </alternativeName>
</protein>
<gene>
    <name evidence="1" type="primary">murG</name>
    <name type="ordered locus">PSPTO_4408</name>
</gene>
<accession>Q87WY5</accession>
<name>MURG_PSESM</name>
<comment type="function">
    <text evidence="1">Cell wall formation. Catalyzes the transfer of a GlcNAc subunit on undecaprenyl-pyrophosphoryl-MurNAc-pentapeptide (lipid intermediate I) to form undecaprenyl-pyrophosphoryl-MurNAc-(pentapeptide)GlcNAc (lipid intermediate II).</text>
</comment>
<comment type="catalytic activity">
    <reaction evidence="1">
        <text>di-trans,octa-cis-undecaprenyl diphospho-N-acetyl-alpha-D-muramoyl-L-alanyl-D-glutamyl-meso-2,6-diaminopimeloyl-D-alanyl-D-alanine + UDP-N-acetyl-alpha-D-glucosamine = di-trans,octa-cis-undecaprenyl diphospho-[N-acetyl-alpha-D-glucosaminyl-(1-&gt;4)]-N-acetyl-alpha-D-muramoyl-L-alanyl-D-glutamyl-meso-2,6-diaminopimeloyl-D-alanyl-D-alanine + UDP + H(+)</text>
        <dbReference type="Rhea" id="RHEA:31227"/>
        <dbReference type="ChEBI" id="CHEBI:15378"/>
        <dbReference type="ChEBI" id="CHEBI:57705"/>
        <dbReference type="ChEBI" id="CHEBI:58223"/>
        <dbReference type="ChEBI" id="CHEBI:61387"/>
        <dbReference type="ChEBI" id="CHEBI:61388"/>
        <dbReference type="EC" id="2.4.1.227"/>
    </reaction>
</comment>
<comment type="pathway">
    <text evidence="1">Cell wall biogenesis; peptidoglycan biosynthesis.</text>
</comment>
<comment type="subcellular location">
    <subcellularLocation>
        <location evidence="1">Cell inner membrane</location>
        <topology evidence="1">Peripheral membrane protein</topology>
        <orientation evidence="1">Cytoplasmic side</orientation>
    </subcellularLocation>
</comment>
<comment type="similarity">
    <text evidence="1">Belongs to the glycosyltransferase 28 family. MurG subfamily.</text>
</comment>
<proteinExistence type="inferred from homology"/>